<sequence>MKKARRSPSRRKGARLWYVGGSQF</sequence>
<evidence type="ECO:0000250" key="1">
    <source>
        <dbReference type="UniProtKB" id="P69592"/>
    </source>
</evidence>
<evidence type="ECO:0000305" key="2"/>
<accession>P69549</accession>
<accession>P08766</accession>
<organismHost>
    <name type="scientific">Escherichia coli</name>
    <dbReference type="NCBI Taxonomy" id="562"/>
</organismHost>
<organism>
    <name type="scientific">Enterobacteria phage phiK</name>
    <name type="common">Bacteriophage phi-K</name>
    <dbReference type="NCBI Taxonomy" id="10848"/>
    <lineage>
        <taxon>Viruses</taxon>
        <taxon>Monodnaviria</taxon>
        <taxon>Sangervirae</taxon>
        <taxon>Phixviricota</taxon>
        <taxon>Malgrandaviricetes</taxon>
        <taxon>Petitvirales</taxon>
        <taxon>Microviridae</taxon>
        <taxon>Bullavirinae</taxon>
        <taxon>Alphatrevirus</taxon>
    </lineage>
</organism>
<reference key="1">
    <citation type="journal article" date="1996" name="J. Biochem.">
        <title>The virion proteins encoded by bacteriophage phi K and its host-range mutant phi KhT: host-range determination and DNA binding properties.</title>
        <authorList>
            <person name="Kodaira K."/>
            <person name="Oki M."/>
            <person name="Kakikawa M."/>
            <person name="Kimoto H."/>
            <person name="Taketo A."/>
        </authorList>
    </citation>
    <scope>NUCLEOTIDE SEQUENCE [GENOMIC DNA] (PHI-K AND MUTANT PHI KHT)</scope>
</reference>
<protein>
    <recommendedName>
        <fullName>DNA-binding protein J</fullName>
    </recommendedName>
    <alternativeName>
        <fullName>J protein</fullName>
    </alternativeName>
    <alternativeName>
        <fullName>Small core protein</fullName>
    </alternativeName>
</protein>
<keyword id="KW-0167">Capsid protein</keyword>
<keyword id="KW-0238">DNA-binding</keyword>
<keyword id="KW-1035">Host cytoplasm</keyword>
<keyword id="KW-0231">Viral genome packaging</keyword>
<keyword id="KW-1188">Viral release from host cell</keyword>
<keyword id="KW-0946">Virion</keyword>
<feature type="chain" id="PRO_0000164905" description="DNA-binding protein J">
    <location>
        <begin position="1"/>
        <end position="24"/>
    </location>
</feature>
<dbReference type="EMBL" id="X60323">
    <property type="protein sequence ID" value="CAA42890.1"/>
    <property type="molecule type" value="Genomic_DNA"/>
</dbReference>
<dbReference type="PIR" id="JC4804">
    <property type="entry name" value="JC4804"/>
</dbReference>
<dbReference type="RefSeq" id="NP_043948.1">
    <property type="nucleotide sequence ID" value="NC_001730.1"/>
</dbReference>
<dbReference type="SMR" id="P69549"/>
<dbReference type="GeneID" id="1261198"/>
<dbReference type="KEGG" id="vg:1261198"/>
<dbReference type="Proteomes" id="UP000002122">
    <property type="component" value="Segment"/>
</dbReference>
<dbReference type="GO" id="GO:0030430">
    <property type="term" value="C:host cell cytoplasm"/>
    <property type="evidence" value="ECO:0007669"/>
    <property type="project" value="UniProtKB-SubCell"/>
</dbReference>
<dbReference type="GO" id="GO:0019028">
    <property type="term" value="C:viral capsid"/>
    <property type="evidence" value="ECO:0007669"/>
    <property type="project" value="UniProtKB-KW"/>
</dbReference>
<dbReference type="GO" id="GO:0003677">
    <property type="term" value="F:DNA binding"/>
    <property type="evidence" value="ECO:0007669"/>
    <property type="project" value="UniProtKB-KW"/>
</dbReference>
<dbReference type="InterPro" id="IPR006815">
    <property type="entry name" value="Microvir_J-like"/>
</dbReference>
<dbReference type="Pfam" id="PF04726">
    <property type="entry name" value="Microvir_J"/>
    <property type="match status" value="1"/>
</dbReference>
<dbReference type="PIRSF" id="PIRSF004161">
    <property type="entry name" value="Microvir_J"/>
    <property type="match status" value="1"/>
</dbReference>
<proteinExistence type="inferred from homology"/>
<name>J_BPPHK</name>
<gene>
    <name type="primary">J</name>
</gene>
<comment type="function">
    <text evidence="1">Mediates ssDNA packaging into virion, it locates to the internal surface of the capsid, thereby displacing the internal scaffolding protein B during virion formation. Protein J binds to and is packaged with the viral ssDNA. Additionally, protein J plays a role in viral attachment efficiency to the host cell.</text>
</comment>
<comment type="subunit">
    <text evidence="1">Interacts with F protein.</text>
</comment>
<comment type="subcellular location">
    <subcellularLocation>
        <location evidence="1">Virion</location>
    </subcellularLocation>
    <subcellularLocation>
        <location evidence="1">Host cytoplasm</location>
    </subcellularLocation>
    <text evidence="1">situated at the interface between the internal surface of the capsid and the nucleic acid.</text>
</comment>
<comment type="miscellaneous">
    <text>Phi KhT, a host-range mutant of phi K, can grow on E.coli C and B, besides K12, and is more thermosensitive than the parental phage phi K.</text>
</comment>
<comment type="similarity">
    <text evidence="2">Belongs to the microviridae J protein family.</text>
</comment>